<name>S9A_CALPY</name>
<keyword id="KW-1015">Disulfide bond</keyword>
<keyword id="KW-0166">Nematocyst</keyword>
<keyword id="KW-0528">Neurotoxin</keyword>
<keyword id="KW-0677">Repeat</keyword>
<keyword id="KW-0964">Secreted</keyword>
<keyword id="KW-0732">Signal</keyword>
<keyword id="KW-0800">Toxin</keyword>
<accession>P0DY44</accession>
<evidence type="ECO:0000255" key="1"/>
<evidence type="ECO:0000269" key="2">
    <source>
    </source>
</evidence>
<evidence type="ECO:0000303" key="3">
    <source>
    </source>
</evidence>
<evidence type="ECO:0000305" key="4"/>
<evidence type="ECO:0000305" key="5">
    <source>
    </source>
</evidence>
<protein>
    <recommendedName>
        <fullName evidence="3">Structural toxin peptide sea anemone type 9a</fullName>
        <shortName evidence="3">Structural toxin peptide SA9-Cpp1a</shortName>
    </recommendedName>
</protein>
<reference key="1">
    <citation type="journal article" date="2024" name="Genome Biol. Evol.">
        <title>Molecular insights into the low complexity secreted venom of Calliactis polypus.</title>
        <authorList>
            <person name="Smith H.L."/>
            <person name="Broszczak D.A."/>
            <person name="Bryan S.E."/>
            <person name="Norton R.S."/>
            <person name="Prentis P.J."/>
        </authorList>
    </citation>
    <scope>NUCLEOTIDE SEQUENCE [MRNA]</scope>
    <scope>IDENTIFICATION BY MASS SPECTROMETRY</scope>
    <scope>SUBCELLULAR LOCATION</scope>
</reference>
<organism>
    <name type="scientific">Calliactis polypus</name>
    <name type="common">Hermit crab anemone</name>
    <name type="synonym">Priapus polypus</name>
    <dbReference type="NCBI Taxonomy" id="656064"/>
    <lineage>
        <taxon>Eukaryota</taxon>
        <taxon>Metazoa</taxon>
        <taxon>Cnidaria</taxon>
        <taxon>Anthozoa</taxon>
        <taxon>Hexacorallia</taxon>
        <taxon>Actiniaria</taxon>
        <taxon>Nynantheae</taxon>
        <taxon>Hormathiidae</taxon>
        <taxon>Calliactis</taxon>
    </lineage>
</organism>
<proteinExistence type="evidence at protein level"/>
<gene>
    <name evidence="3" type="ORF">c44591_g1_i1</name>
</gene>
<feature type="signal peptide" evidence="1">
    <location>
        <begin position="1"/>
        <end position="23"/>
    </location>
</feature>
<feature type="chain" id="PRO_0000462202" description="Structural toxin peptide sea anemone type 9a" evidence="5">
    <location>
        <begin position="24"/>
        <end position="117"/>
    </location>
</feature>
<feature type="repeat" description="1" evidence="5">
    <location>
        <begin position="28"/>
        <end position="56"/>
    </location>
</feature>
<feature type="repeat" description="2" evidence="5">
    <location>
        <begin position="57"/>
        <end position="88"/>
    </location>
</feature>
<feature type="repeat" description="3" evidence="5">
    <location>
        <begin position="89"/>
        <end position="117"/>
    </location>
</feature>
<feature type="region of interest" description="3 X approximate tandem repeats" evidence="5">
    <location>
        <begin position="29"/>
        <end position="117"/>
    </location>
</feature>
<sequence length="117" mass="13121">MKTIIAIFSLAAMIVLVRPTPLENDEWTRSIINVPCKKCYKKDSNGVCRKIFGCQEKRNIIDPPCRKCYKKDSNNKCVRIAGCGNEAVKRAIINPQGCARCHKPDPNGKCRKIHGCS</sequence>
<comment type="function">
    <text evidence="5">Putative neurotoxin.</text>
</comment>
<comment type="subcellular location">
    <subcellularLocation>
        <location evidence="2">Secreted</location>
    </subcellularLocation>
    <subcellularLocation>
        <location evidence="4">Nematocyst</location>
    </subcellularLocation>
</comment>
<comment type="tissue specificity">
    <text evidence="2">Expressed outside of acontia.</text>
</comment>
<comment type="PTM">
    <text evidence="4">Contains 6 disulfide bonds.</text>
</comment>